<dbReference type="EC" id="3.2.2.5" evidence="1"/>
<dbReference type="EMBL" id="AM408590">
    <property type="protein sequence ID" value="CAL73950.1"/>
    <property type="molecule type" value="Genomic_DNA"/>
</dbReference>
<dbReference type="RefSeq" id="WP_003899759.1">
    <property type="nucleotide sequence ID" value="NC_008769.1"/>
</dbReference>
<dbReference type="SMR" id="A0A0H3MAA9"/>
<dbReference type="KEGG" id="mbb:BCG_3960c"/>
<dbReference type="HOGENOM" id="CLU_013587_0_0_11"/>
<dbReference type="Proteomes" id="UP000001472">
    <property type="component" value="Chromosome"/>
</dbReference>
<dbReference type="GO" id="GO:0009279">
    <property type="term" value="C:cell outer membrane"/>
    <property type="evidence" value="ECO:0007669"/>
    <property type="project" value="UniProtKB-SubCell"/>
</dbReference>
<dbReference type="GO" id="GO:0009986">
    <property type="term" value="C:cell surface"/>
    <property type="evidence" value="ECO:0007669"/>
    <property type="project" value="UniProtKB-SubCell"/>
</dbReference>
<dbReference type="GO" id="GO:0005576">
    <property type="term" value="C:extracellular region"/>
    <property type="evidence" value="ECO:0007669"/>
    <property type="project" value="UniProtKB-SubCell"/>
</dbReference>
<dbReference type="GO" id="GO:0046930">
    <property type="term" value="C:pore complex"/>
    <property type="evidence" value="ECO:0007669"/>
    <property type="project" value="UniProtKB-KW"/>
</dbReference>
<dbReference type="GO" id="GO:0003953">
    <property type="term" value="F:NAD+ nucleosidase activity"/>
    <property type="evidence" value="ECO:0007669"/>
    <property type="project" value="UniProtKB-EC"/>
</dbReference>
<dbReference type="GO" id="GO:0050135">
    <property type="term" value="F:NADP+ nucleosidase activity"/>
    <property type="evidence" value="ECO:0007669"/>
    <property type="project" value="InterPro"/>
</dbReference>
<dbReference type="GO" id="GO:0015288">
    <property type="term" value="F:porin activity"/>
    <property type="evidence" value="ECO:0007669"/>
    <property type="project" value="UniProtKB-KW"/>
</dbReference>
<dbReference type="GO" id="GO:0006811">
    <property type="term" value="P:monoatomic ion transport"/>
    <property type="evidence" value="ECO:0007669"/>
    <property type="project" value="UniProtKB-KW"/>
</dbReference>
<dbReference type="InterPro" id="IPR025331">
    <property type="entry name" value="TNT"/>
</dbReference>
<dbReference type="Pfam" id="PF14021">
    <property type="entry name" value="TNT"/>
    <property type="match status" value="1"/>
</dbReference>
<accession>A0A0H3MAA9</accession>
<sequence length="846" mass="88335">MAPLAVDPAALDSAGGAVVAAGAGLGAVISSLTAALAGCAGMAGDDPAGAVFGRSYDGSAAALVQAMSVARNGLCNLGDGVRMSAHNYSLAEAMSDVAGRAAPLPAPPPSGCVGVGAPPSAVGGGGGAPKGWGWVAPYIGMIWPNGDSTKLRAAAVAWRSAGTQFALTEIQSTAGPMGVIRAQQLPEAGLIESAFADAYASTTAVVGQCHQLAAQLDAYAARIDAVHAAVLDLLARICDPLTGIKEVWEFLTDQDEDEIQRIAHDIAVVVDQFSGEVDALAAEITAVVSHAEAVITAMADHAGKQWDRFLHSNPVGVVIDGTGQQLKGFGEEAFGMAKDSWDLGPLRASIDPFGWYRSWEEMLTGMAPLAGLGGENAPGVVESWKQFGKSLIHWDEWTTNPNEALGKTVFDAATLALPGGPLSKLGSKGRDILAGVRGLKERLEPTTPHLEPPATPPRPGPQPPRIEPPESGHPAPAPAAKPAPVPANGPLPHSPTESKPPPVDRPAEPVAPSSASAGQPRVSAATTPGTHVPHGLPQPGEHVPAQAPPATTLLGGPPVESAPATAHQPQWATTPAAPAAAPHSTPGGVHSTESGPHGRSLSAHGSEPTHDGASHGSGHGSGSEPPGLHAPHREQQLAMHSNEPAGEGWHRLSDEAVDPQYGEPLSRHWDFTDNPADRSRINPVVAQLMEDPNAPFGRDPQGQPYTQERYQERFNSVGPWGQQYSNFPPNNGAVPGTRIAYTNLEKFLSDYGPQLDRIGGDQGKYLAIMEHGRPASWEQRALHVTSLRDPYHAYTIDWLPEGWFIEVSEVAPGCGQPGGSIQVRIFDHQNEMRKVEELIRRGVLRQ</sequence>
<gene>
    <name evidence="6" type="primary">cpnT</name>
    <name evidence="9" type="ordered locus">BCG_3960c</name>
</gene>
<keyword id="KW-0998">Cell outer membrane</keyword>
<keyword id="KW-0378">Hydrolase</keyword>
<keyword id="KW-0406">Ion transport</keyword>
<keyword id="KW-0472">Membrane</keyword>
<keyword id="KW-0520">NAD</keyword>
<keyword id="KW-0626">Porin</keyword>
<keyword id="KW-0964">Secreted</keyword>
<keyword id="KW-0812">Transmembrane</keyword>
<keyword id="KW-1134">Transmembrane beta strand</keyword>
<keyword id="KW-0813">Transport</keyword>
<reference key="1">
    <citation type="journal article" date="2007" name="Proc. Natl. Acad. Sci. U.S.A.">
        <title>Genome plasticity of BCG and impact on vaccine efficacy.</title>
        <authorList>
            <person name="Brosch R."/>
            <person name="Gordon S.V."/>
            <person name="Garnier T."/>
            <person name="Eiglmeier K."/>
            <person name="Frigui W."/>
            <person name="Valenti P."/>
            <person name="Dos Santos S."/>
            <person name="Duthoy S."/>
            <person name="Lacroix C."/>
            <person name="Garcia-Pelayo C."/>
            <person name="Inwald J.K."/>
            <person name="Golby P."/>
            <person name="Garcia J.N."/>
            <person name="Hewinson R.G."/>
            <person name="Behr M.A."/>
            <person name="Quail M.A."/>
            <person name="Churcher C."/>
            <person name="Barrell B.G."/>
            <person name="Parkhill J."/>
            <person name="Cole S.T."/>
        </authorList>
    </citation>
    <scope>NUCLEOTIDE SEQUENCE [LARGE SCALE GENOMIC DNA]</scope>
    <source>
        <strain>BCG / Pasteur 1173P2</strain>
    </source>
</reference>
<reference key="2">
    <citation type="journal article" date="2015" name="Antimicrob. Agents Chemother.">
        <title>The Mycobacterium tuberculosis outer membrane channel protein CpnT confers susceptibility to toxic molecules.</title>
        <authorList>
            <person name="Danilchanka O."/>
            <person name="Pires D."/>
            <person name="Anes E."/>
            <person name="Niederweis M."/>
        </authorList>
    </citation>
    <scope>FUNCTION</scope>
    <scope>DISRUPTION PHENOTYPE</scope>
    <source>
        <strain>BCG / Pasteur</strain>
    </source>
</reference>
<evidence type="ECO:0000250" key="1">
    <source>
        <dbReference type="UniProtKB" id="O05442"/>
    </source>
</evidence>
<evidence type="ECO:0000250" key="2">
    <source>
        <dbReference type="UniProtKB" id="Q4WL81"/>
    </source>
</evidence>
<evidence type="ECO:0000255" key="3"/>
<evidence type="ECO:0000256" key="4">
    <source>
        <dbReference type="SAM" id="MobiDB-lite"/>
    </source>
</evidence>
<evidence type="ECO:0000269" key="5">
    <source>
    </source>
</evidence>
<evidence type="ECO:0000303" key="6">
    <source>
    </source>
</evidence>
<evidence type="ECO:0000305" key="7"/>
<evidence type="ECO:0000305" key="8">
    <source>
    </source>
</evidence>
<evidence type="ECO:0000312" key="9">
    <source>
        <dbReference type="EMBL" id="CAL73950.1"/>
    </source>
</evidence>
<comment type="function">
    <text evidence="5">The N-terminal domain (NTD) forms an outer membrane channel and is used for uptake of nutrients across the outer membrane. Also confers susceptibility to structurally different antibiotics and antituberculosis drugs, and to toxic immune factors such as nitric oxide (NO). The C-terminal domain (TNT) is dispensable for normal growth in macrophages.</text>
</comment>
<comment type="catalytic activity">
    <reaction evidence="1">
        <text>NAD(+) + H2O = ADP-D-ribose + nicotinamide + H(+)</text>
        <dbReference type="Rhea" id="RHEA:16301"/>
        <dbReference type="ChEBI" id="CHEBI:15377"/>
        <dbReference type="ChEBI" id="CHEBI:15378"/>
        <dbReference type="ChEBI" id="CHEBI:17154"/>
        <dbReference type="ChEBI" id="CHEBI:57540"/>
        <dbReference type="ChEBI" id="CHEBI:57967"/>
        <dbReference type="EC" id="3.2.2.5"/>
    </reaction>
</comment>
<comment type="activity regulation">
    <text evidence="1">Glycohydrolase activity is completely inhibited by interaction with the immunity factor for TNT (IFT) homolog. This inhibition protects M.bovis from self-poisoning.</text>
</comment>
<comment type="subunit">
    <text evidence="1">Interacts with the immunity factor for TNT (IFT) homolog.</text>
</comment>
<comment type="subcellular location">
    <molecule>N-terminal channel domain</molecule>
    <subcellularLocation>
        <location evidence="1">Cell outer membrane</location>
    </subcellularLocation>
</comment>
<comment type="subcellular location">
    <molecule>Tuberculosis necrotizing toxin homolog</molecule>
    <subcellularLocation>
        <location evidence="1">Secreted</location>
    </subcellularLocation>
    <subcellularLocation>
        <location evidence="1">Cell surface</location>
    </subcellularLocation>
    <text evidence="8">M.bovis does not permeabilize phagosomes and does not escape from phagosomes. Thus, the C-terminal TNT domain is likely trapped in phagosomes during M.bovis BCG infection, where it is incapable of inducing necrosis of macrophages.</text>
</comment>
<comment type="PTM">
    <text evidence="1">The C-terminal domain (TNT) is probably cleaved.</text>
</comment>
<comment type="disruption phenotype">
    <text evidence="5">Deletion of the gene confers high-level drug resistance to a wide range of antibiotics and antituberculosis drugs, and protects M.bovis from killing in macrophages that prevent intracellular mycobacterial replication. Increases resistance to small, hydrophilic antibiotics, to antituberculosis drugs, to large, hydrophobic or hydrophilic antibiotics such as erythromycin, rifampicin and streptomycin, and to nitric oxide. Under in vivo conditions, such as in human THP-1 macrophages, absence of the gene drastically reduces intracellular growth of M.bovis.</text>
</comment>
<name>CPNT_MYCBP</name>
<protein>
    <recommendedName>
        <fullName evidence="6">Outer membrane channel protein CpnT</fullName>
    </recommendedName>
    <component>
        <recommendedName>
            <fullName evidence="7">N-terminal channel domain</fullName>
        </recommendedName>
    </component>
    <component>
        <recommendedName>
            <fullName evidence="7">Tuberculosis necrotizing toxin homolog</fullName>
            <shortName evidence="7">TNT homolog</shortName>
        </recommendedName>
        <alternativeName>
            <fullName evidence="1">NAD(+) glycohydrolase</fullName>
            <ecNumber evidence="1">3.2.2.5</ecNumber>
        </alternativeName>
    </component>
</protein>
<feature type="chain" id="PRO_0000437785" description="Outer membrane channel protein CpnT">
    <location>
        <begin position="1"/>
        <end position="846"/>
    </location>
</feature>
<feature type="chain" id="PRO_0000437786" description="N-terminal channel domain" evidence="7">
    <location>
        <begin position="1"/>
        <end status="unknown"/>
    </location>
</feature>
<feature type="chain" id="PRO_0000437787" description="Tuberculosis necrotizing toxin homolog" evidence="7">
    <location>
        <begin status="unknown"/>
        <end position="846"/>
    </location>
</feature>
<feature type="domain" description="TNT" evidence="3">
    <location>
        <begin position="751"/>
        <end position="846"/>
    </location>
</feature>
<feature type="region of interest" description="NTD" evidence="1">
    <location>
        <begin position="1"/>
        <end position="443"/>
    </location>
</feature>
<feature type="region of interest" description="Disordered" evidence="4">
    <location>
        <begin position="442"/>
        <end position="630"/>
    </location>
</feature>
<feature type="region of interest" description="TNT" evidence="1">
    <location>
        <begin position="651"/>
        <end position="846"/>
    </location>
</feature>
<feature type="compositionally biased region" description="Pro residues" evidence="4">
    <location>
        <begin position="450"/>
        <end position="466"/>
    </location>
</feature>
<feature type="compositionally biased region" description="Pro residues" evidence="4">
    <location>
        <begin position="475"/>
        <end position="504"/>
    </location>
</feature>
<feature type="compositionally biased region" description="Low complexity" evidence="4">
    <location>
        <begin position="508"/>
        <end position="517"/>
    </location>
</feature>
<feature type="compositionally biased region" description="Low complexity" evidence="4">
    <location>
        <begin position="562"/>
        <end position="586"/>
    </location>
</feature>
<feature type="active site" evidence="2">
    <location>
        <position position="757"/>
    </location>
</feature>
<feature type="active site" evidence="2">
    <location>
        <position position="822"/>
    </location>
</feature>
<feature type="binding site" evidence="2">
    <location>
        <position position="780"/>
    </location>
    <ligand>
        <name>NAD(+)</name>
        <dbReference type="ChEBI" id="CHEBI:57540"/>
    </ligand>
</feature>
<organism>
    <name type="scientific">Mycobacterium bovis (strain BCG / Pasteur 1173P2)</name>
    <dbReference type="NCBI Taxonomy" id="410289"/>
    <lineage>
        <taxon>Bacteria</taxon>
        <taxon>Bacillati</taxon>
        <taxon>Actinomycetota</taxon>
        <taxon>Actinomycetes</taxon>
        <taxon>Mycobacteriales</taxon>
        <taxon>Mycobacteriaceae</taxon>
        <taxon>Mycobacterium</taxon>
        <taxon>Mycobacterium tuberculosis complex</taxon>
    </lineage>
</organism>
<proteinExistence type="inferred from homology"/>